<organism>
    <name type="scientific">Homo sapiens</name>
    <name type="common">Human</name>
    <dbReference type="NCBI Taxonomy" id="9606"/>
    <lineage>
        <taxon>Eukaryota</taxon>
        <taxon>Metazoa</taxon>
        <taxon>Chordata</taxon>
        <taxon>Craniata</taxon>
        <taxon>Vertebrata</taxon>
        <taxon>Euteleostomi</taxon>
        <taxon>Mammalia</taxon>
        <taxon>Eutheria</taxon>
        <taxon>Euarchontoglires</taxon>
        <taxon>Primates</taxon>
        <taxon>Haplorrhini</taxon>
        <taxon>Catarrhini</taxon>
        <taxon>Hominidae</taxon>
        <taxon>Homo</taxon>
    </lineage>
</organism>
<sequence>MEGRVQLMKALLARPLRPAARRWRNPIPFPETFDGDTDRLPEFIVQTSSYMFVDENTFSNDALKVTFLITRLTGPALQWVIPYIKKESPLLSDYRGFLAEMKRVFGWEEDEDF</sequence>
<keyword id="KW-1267">Proteomics identification</keyword>
<keyword id="KW-1185">Reference proteome</keyword>
<dbReference type="EMBL" id="AL136169">
    <property type="status" value="NOT_ANNOTATED_CDS"/>
    <property type="molecule type" value="Genomic_DNA"/>
</dbReference>
<dbReference type="EMBL" id="BC113720">
    <property type="protein sequence ID" value="AAI13721.1"/>
    <property type="molecule type" value="mRNA"/>
</dbReference>
<dbReference type="EMBL" id="BC117393">
    <property type="protein sequence ID" value="AAI17394.1"/>
    <property type="molecule type" value="mRNA"/>
</dbReference>
<dbReference type="CCDS" id="CCDS43996.1"/>
<dbReference type="RefSeq" id="NP_001071641.1">
    <property type="nucleotide sequence ID" value="NM_001078173.2"/>
</dbReference>
<dbReference type="SMR" id="Q17RB0"/>
<dbReference type="BioGRID" id="137545">
    <property type="interactions" value="14"/>
</dbReference>
<dbReference type="FunCoup" id="Q17RB0">
    <property type="interactions" value="8"/>
</dbReference>
<dbReference type="IntAct" id="Q17RB0">
    <property type="interactions" value="11"/>
</dbReference>
<dbReference type="STRING" id="9606.ENSP00000375268"/>
<dbReference type="iPTMnet" id="Q17RB0"/>
<dbReference type="PhosphoSitePlus" id="Q17RB0"/>
<dbReference type="BioMuta" id="RTL8B"/>
<dbReference type="jPOST" id="Q17RB0"/>
<dbReference type="MassIVE" id="Q17RB0"/>
<dbReference type="PaxDb" id="9606-ENSP00000375268"/>
<dbReference type="PeptideAtlas" id="Q17RB0"/>
<dbReference type="ProteomicsDB" id="61142"/>
<dbReference type="Pumba" id="Q17RB0"/>
<dbReference type="Antibodypedia" id="56315">
    <property type="antibodies" value="86 antibodies from 10 providers"/>
</dbReference>
<dbReference type="DNASU" id="441518"/>
<dbReference type="Ensembl" id="ENST00000391440.3">
    <property type="protein sequence ID" value="ENSP00000375268.1"/>
    <property type="gene ID" value="ENSG00000212747.5"/>
</dbReference>
<dbReference type="GeneID" id="441518"/>
<dbReference type="KEGG" id="hsa:441518"/>
<dbReference type="MANE-Select" id="ENST00000391440.3">
    <property type="protein sequence ID" value="ENSP00000375268.1"/>
    <property type="RefSeq nucleotide sequence ID" value="NM_001078173.2"/>
    <property type="RefSeq protein sequence ID" value="NP_001071641.1"/>
</dbReference>
<dbReference type="UCSC" id="uc004eyc.2">
    <property type="organism name" value="human"/>
</dbReference>
<dbReference type="AGR" id="HGNC:33156"/>
<dbReference type="CTD" id="441518"/>
<dbReference type="DisGeNET" id="441518"/>
<dbReference type="GeneCards" id="RTL8B"/>
<dbReference type="HGNC" id="HGNC:33156">
    <property type="gene designation" value="RTL8B"/>
</dbReference>
<dbReference type="HPA" id="ENSG00000212747">
    <property type="expression patterns" value="Low tissue specificity"/>
</dbReference>
<dbReference type="neXtProt" id="NX_Q17RB0"/>
<dbReference type="OpenTargets" id="ENSG00000212747"/>
<dbReference type="PharmGKB" id="PA162385922"/>
<dbReference type="VEuPathDB" id="HostDB:ENSG00000212747"/>
<dbReference type="eggNOG" id="ENOG502RU23">
    <property type="taxonomic scope" value="Eukaryota"/>
</dbReference>
<dbReference type="GeneTree" id="ENSGT00940000154665"/>
<dbReference type="HOGENOM" id="CLU_154949_0_0_1"/>
<dbReference type="InParanoid" id="Q17RB0"/>
<dbReference type="OMA" id="MDNRMRL"/>
<dbReference type="OrthoDB" id="9508136at2759"/>
<dbReference type="PAN-GO" id="Q17RB0">
    <property type="GO annotations" value="1 GO annotation based on evolutionary models"/>
</dbReference>
<dbReference type="PhylomeDB" id="Q17RB0"/>
<dbReference type="TreeFam" id="TF337843"/>
<dbReference type="PathwayCommons" id="Q17RB0"/>
<dbReference type="SignaLink" id="Q17RB0"/>
<dbReference type="BioGRID-ORCS" id="441518">
    <property type="hits" value="9 hits in 666 CRISPR screens"/>
</dbReference>
<dbReference type="ChiTaRS" id="FAM127C">
    <property type="organism name" value="human"/>
</dbReference>
<dbReference type="GenomeRNAi" id="441518"/>
<dbReference type="Pharos" id="Q17RB0">
    <property type="development level" value="Tdark"/>
</dbReference>
<dbReference type="PRO" id="PR:Q17RB0"/>
<dbReference type="Proteomes" id="UP000005640">
    <property type="component" value="Chromosome X"/>
</dbReference>
<dbReference type="RNAct" id="Q17RB0">
    <property type="molecule type" value="protein"/>
</dbReference>
<dbReference type="Bgee" id="ENSG00000212747">
    <property type="expression patterns" value="Expressed in right coronary artery and 101 other cell types or tissues"/>
</dbReference>
<dbReference type="InterPro" id="IPR032549">
    <property type="entry name" value="DUF4939"/>
</dbReference>
<dbReference type="Pfam" id="PF16297">
    <property type="entry name" value="DUF4939"/>
    <property type="match status" value="1"/>
</dbReference>
<evidence type="ECO:0000269" key="1">
    <source>
    </source>
</evidence>
<evidence type="ECO:0000305" key="2"/>
<evidence type="ECO:0000312" key="3">
    <source>
        <dbReference type="HGNC" id="HGNC:33156"/>
    </source>
</evidence>
<reference key="1">
    <citation type="journal article" date="2005" name="Nature">
        <title>The DNA sequence of the human X chromosome.</title>
        <authorList>
            <person name="Ross M.T."/>
            <person name="Grafham D.V."/>
            <person name="Coffey A.J."/>
            <person name="Scherer S."/>
            <person name="McLay K."/>
            <person name="Muzny D."/>
            <person name="Platzer M."/>
            <person name="Howell G.R."/>
            <person name="Burrows C."/>
            <person name="Bird C.P."/>
            <person name="Frankish A."/>
            <person name="Lovell F.L."/>
            <person name="Howe K.L."/>
            <person name="Ashurst J.L."/>
            <person name="Fulton R.S."/>
            <person name="Sudbrak R."/>
            <person name="Wen G."/>
            <person name="Jones M.C."/>
            <person name="Hurles M.E."/>
            <person name="Andrews T.D."/>
            <person name="Scott C.E."/>
            <person name="Searle S."/>
            <person name="Ramser J."/>
            <person name="Whittaker A."/>
            <person name="Deadman R."/>
            <person name="Carter N.P."/>
            <person name="Hunt S.E."/>
            <person name="Chen R."/>
            <person name="Cree A."/>
            <person name="Gunaratne P."/>
            <person name="Havlak P."/>
            <person name="Hodgson A."/>
            <person name="Metzker M.L."/>
            <person name="Richards S."/>
            <person name="Scott G."/>
            <person name="Steffen D."/>
            <person name="Sodergren E."/>
            <person name="Wheeler D.A."/>
            <person name="Worley K.C."/>
            <person name="Ainscough R."/>
            <person name="Ambrose K.D."/>
            <person name="Ansari-Lari M.A."/>
            <person name="Aradhya S."/>
            <person name="Ashwell R.I."/>
            <person name="Babbage A.K."/>
            <person name="Bagguley C.L."/>
            <person name="Ballabio A."/>
            <person name="Banerjee R."/>
            <person name="Barker G.E."/>
            <person name="Barlow K.F."/>
            <person name="Barrett I.P."/>
            <person name="Bates K.N."/>
            <person name="Beare D.M."/>
            <person name="Beasley H."/>
            <person name="Beasley O."/>
            <person name="Beck A."/>
            <person name="Bethel G."/>
            <person name="Blechschmidt K."/>
            <person name="Brady N."/>
            <person name="Bray-Allen S."/>
            <person name="Bridgeman A.M."/>
            <person name="Brown A.J."/>
            <person name="Brown M.J."/>
            <person name="Bonnin D."/>
            <person name="Bruford E.A."/>
            <person name="Buhay C."/>
            <person name="Burch P."/>
            <person name="Burford D."/>
            <person name="Burgess J."/>
            <person name="Burrill W."/>
            <person name="Burton J."/>
            <person name="Bye J.M."/>
            <person name="Carder C."/>
            <person name="Carrel L."/>
            <person name="Chako J."/>
            <person name="Chapman J.C."/>
            <person name="Chavez D."/>
            <person name="Chen E."/>
            <person name="Chen G."/>
            <person name="Chen Y."/>
            <person name="Chen Z."/>
            <person name="Chinault C."/>
            <person name="Ciccodicola A."/>
            <person name="Clark S.Y."/>
            <person name="Clarke G."/>
            <person name="Clee C.M."/>
            <person name="Clegg S."/>
            <person name="Clerc-Blankenburg K."/>
            <person name="Clifford K."/>
            <person name="Cobley V."/>
            <person name="Cole C.G."/>
            <person name="Conquer J.S."/>
            <person name="Corby N."/>
            <person name="Connor R.E."/>
            <person name="David R."/>
            <person name="Davies J."/>
            <person name="Davis C."/>
            <person name="Davis J."/>
            <person name="Delgado O."/>
            <person name="Deshazo D."/>
            <person name="Dhami P."/>
            <person name="Ding Y."/>
            <person name="Dinh H."/>
            <person name="Dodsworth S."/>
            <person name="Draper H."/>
            <person name="Dugan-Rocha S."/>
            <person name="Dunham A."/>
            <person name="Dunn M."/>
            <person name="Durbin K.J."/>
            <person name="Dutta I."/>
            <person name="Eades T."/>
            <person name="Ellwood M."/>
            <person name="Emery-Cohen A."/>
            <person name="Errington H."/>
            <person name="Evans K.L."/>
            <person name="Faulkner L."/>
            <person name="Francis F."/>
            <person name="Frankland J."/>
            <person name="Fraser A.E."/>
            <person name="Galgoczy P."/>
            <person name="Gilbert J."/>
            <person name="Gill R."/>
            <person name="Gloeckner G."/>
            <person name="Gregory S.G."/>
            <person name="Gribble S."/>
            <person name="Griffiths C."/>
            <person name="Grocock R."/>
            <person name="Gu Y."/>
            <person name="Gwilliam R."/>
            <person name="Hamilton C."/>
            <person name="Hart E.A."/>
            <person name="Hawes A."/>
            <person name="Heath P.D."/>
            <person name="Heitmann K."/>
            <person name="Hennig S."/>
            <person name="Hernandez J."/>
            <person name="Hinzmann B."/>
            <person name="Ho S."/>
            <person name="Hoffs M."/>
            <person name="Howden P.J."/>
            <person name="Huckle E.J."/>
            <person name="Hume J."/>
            <person name="Hunt P.J."/>
            <person name="Hunt A.R."/>
            <person name="Isherwood J."/>
            <person name="Jacob L."/>
            <person name="Johnson D."/>
            <person name="Jones S."/>
            <person name="de Jong P.J."/>
            <person name="Joseph S.S."/>
            <person name="Keenan S."/>
            <person name="Kelly S."/>
            <person name="Kershaw J.K."/>
            <person name="Khan Z."/>
            <person name="Kioschis P."/>
            <person name="Klages S."/>
            <person name="Knights A.J."/>
            <person name="Kosiura A."/>
            <person name="Kovar-Smith C."/>
            <person name="Laird G.K."/>
            <person name="Langford C."/>
            <person name="Lawlor S."/>
            <person name="Leversha M."/>
            <person name="Lewis L."/>
            <person name="Liu W."/>
            <person name="Lloyd C."/>
            <person name="Lloyd D.M."/>
            <person name="Loulseged H."/>
            <person name="Loveland J.E."/>
            <person name="Lovell J.D."/>
            <person name="Lozado R."/>
            <person name="Lu J."/>
            <person name="Lyne R."/>
            <person name="Ma J."/>
            <person name="Maheshwari M."/>
            <person name="Matthews L.H."/>
            <person name="McDowall J."/>
            <person name="McLaren S."/>
            <person name="McMurray A."/>
            <person name="Meidl P."/>
            <person name="Meitinger T."/>
            <person name="Milne S."/>
            <person name="Miner G."/>
            <person name="Mistry S.L."/>
            <person name="Morgan M."/>
            <person name="Morris S."/>
            <person name="Mueller I."/>
            <person name="Mullikin J.C."/>
            <person name="Nguyen N."/>
            <person name="Nordsiek G."/>
            <person name="Nyakatura G."/>
            <person name="O'dell C.N."/>
            <person name="Okwuonu G."/>
            <person name="Palmer S."/>
            <person name="Pandian R."/>
            <person name="Parker D."/>
            <person name="Parrish J."/>
            <person name="Pasternak S."/>
            <person name="Patel D."/>
            <person name="Pearce A.V."/>
            <person name="Pearson D.M."/>
            <person name="Pelan S.E."/>
            <person name="Perez L."/>
            <person name="Porter K.M."/>
            <person name="Ramsey Y."/>
            <person name="Reichwald K."/>
            <person name="Rhodes S."/>
            <person name="Ridler K.A."/>
            <person name="Schlessinger D."/>
            <person name="Schueler M.G."/>
            <person name="Sehra H.K."/>
            <person name="Shaw-Smith C."/>
            <person name="Shen H."/>
            <person name="Sheridan E.M."/>
            <person name="Shownkeen R."/>
            <person name="Skuce C.D."/>
            <person name="Smith M.L."/>
            <person name="Sotheran E.C."/>
            <person name="Steingruber H.E."/>
            <person name="Steward C.A."/>
            <person name="Storey R."/>
            <person name="Swann R.M."/>
            <person name="Swarbreck D."/>
            <person name="Tabor P.E."/>
            <person name="Taudien S."/>
            <person name="Taylor T."/>
            <person name="Teague B."/>
            <person name="Thomas K."/>
            <person name="Thorpe A."/>
            <person name="Timms K."/>
            <person name="Tracey A."/>
            <person name="Trevanion S."/>
            <person name="Tromans A.C."/>
            <person name="d'Urso M."/>
            <person name="Verduzco D."/>
            <person name="Villasana D."/>
            <person name="Waldron L."/>
            <person name="Wall M."/>
            <person name="Wang Q."/>
            <person name="Warren J."/>
            <person name="Warry G.L."/>
            <person name="Wei X."/>
            <person name="West A."/>
            <person name="Whitehead S.L."/>
            <person name="Whiteley M.N."/>
            <person name="Wilkinson J.E."/>
            <person name="Willey D.L."/>
            <person name="Williams G."/>
            <person name="Williams L."/>
            <person name="Williamson A."/>
            <person name="Williamson H."/>
            <person name="Wilming L."/>
            <person name="Woodmansey R.L."/>
            <person name="Wray P.W."/>
            <person name="Yen J."/>
            <person name="Zhang J."/>
            <person name="Zhou J."/>
            <person name="Zoghbi H."/>
            <person name="Zorilla S."/>
            <person name="Buck D."/>
            <person name="Reinhardt R."/>
            <person name="Poustka A."/>
            <person name="Rosenthal A."/>
            <person name="Lehrach H."/>
            <person name="Meindl A."/>
            <person name="Minx P.J."/>
            <person name="Hillier L.W."/>
            <person name="Willard H.F."/>
            <person name="Wilson R.K."/>
            <person name="Waterston R.H."/>
            <person name="Rice C.M."/>
            <person name="Vaudin M."/>
            <person name="Coulson A."/>
            <person name="Nelson D.L."/>
            <person name="Weinstock G."/>
            <person name="Sulston J.E."/>
            <person name="Durbin R.M."/>
            <person name="Hubbard T."/>
            <person name="Gibbs R.A."/>
            <person name="Beck S."/>
            <person name="Rogers J."/>
            <person name="Bentley D.R."/>
        </authorList>
    </citation>
    <scope>NUCLEOTIDE SEQUENCE [LARGE SCALE GENOMIC DNA]</scope>
</reference>
<reference key="2">
    <citation type="journal article" date="2004" name="Genome Res.">
        <title>The status, quality, and expansion of the NIH full-length cDNA project: the Mammalian Gene Collection (MGC).</title>
        <authorList>
            <consortium name="The MGC Project Team"/>
        </authorList>
    </citation>
    <scope>NUCLEOTIDE SEQUENCE [LARGE SCALE MRNA]</scope>
    <source>
        <tissue>Brain</tissue>
    </source>
</reference>
<reference key="3">
    <citation type="journal article" date="2005" name="Cytogenet. Genome Res.">
        <title>A family of neofunctionalized Ty3/gypsy retrotransposon genes in mammalian genomes.</title>
        <authorList>
            <person name="Brandt J."/>
            <person name="Veith A.-M."/>
            <person name="Volff J.-N."/>
        </authorList>
    </citation>
    <scope>GENE FAMILY</scope>
</reference>
<gene>
    <name type="primary">RTL8B</name>
    <name type="synonym">CXX1C</name>
    <name type="synonym">FAM127C</name>
    <name type="synonym">MAR8B</name>
</gene>
<protein>
    <recommendedName>
        <fullName evidence="3">Retrotransposon Gag-like protein 8B</fullName>
    </recommendedName>
    <alternativeName>
        <fullName>Mammalian retrotransposon derived protein 8B</fullName>
    </alternativeName>
</protein>
<comment type="interaction">
    <interactant intactId="EBI-10238588">
        <id>Q17RB0</id>
    </interactant>
    <interactant intactId="EBI-3905054">
        <id>P13196</id>
        <label>ALAS1</label>
    </interactant>
    <organismsDiffer>false</organismsDiffer>
    <experiments>6</experiments>
</comment>
<comment type="interaction">
    <interactant intactId="EBI-10238588">
        <id>Q17RB0</id>
    </interactant>
    <interactant intactId="EBI-10171570">
        <id>Q68D86</id>
        <label>CCDC102B</label>
    </interactant>
    <organismsDiffer>false</organismsDiffer>
    <experiments>3</experiments>
</comment>
<comment type="interaction">
    <interactant intactId="EBI-10238588">
        <id>Q17RB0</id>
    </interactant>
    <interactant intactId="EBI-10171552">
        <id>A1A4E9</id>
        <label>KRT13</label>
    </interactant>
    <organismsDiffer>false</organismsDiffer>
    <experiments>3</experiments>
</comment>
<comment type="interaction">
    <interactant intactId="EBI-10238588">
        <id>Q17RB0</id>
    </interactant>
    <interactant intactId="EBI-2858265">
        <id>Q86TG7</id>
        <label>PEG10</label>
    </interactant>
    <organismsDiffer>false</organismsDiffer>
    <experiments>4</experiments>
</comment>
<comment type="interaction">
    <interactant intactId="EBI-10238588">
        <id>Q17RB0</id>
    </interactant>
    <interactant intactId="EBI-6259410">
        <id>Q86TG7-2</id>
        <label>PEG10</label>
    </interactant>
    <organismsDiffer>false</organismsDiffer>
    <experiments>11</experiments>
</comment>
<comment type="interaction">
    <interactant intactId="EBI-10238588">
        <id>Q17RB0</id>
    </interactant>
    <interactant intactId="EBI-727004">
        <id>O00560</id>
        <label>SDCBP</label>
    </interactant>
    <organismsDiffer>false</organismsDiffer>
    <experiments>3</experiments>
</comment>
<comment type="interaction">
    <interactant intactId="EBI-10238588">
        <id>Q17RB0</id>
    </interactant>
    <interactant intactId="EBI-742688">
        <id>Q9NZD8</id>
        <label>SPG21</label>
    </interactant>
    <organismsDiffer>false</organismsDiffer>
    <experiments>3</experiments>
</comment>
<comment type="interaction">
    <interactant intactId="EBI-10238588">
        <id>Q17RB0</id>
    </interactant>
    <interactant intactId="EBI-742268">
        <id>O75478</id>
        <label>TADA2A</label>
    </interactant>
    <organismsDiffer>false</organismsDiffer>
    <experiments>3</experiments>
</comment>
<comment type="interaction">
    <interactant intactId="EBI-10238588">
        <id>Q17RB0</id>
    </interactant>
    <interactant intactId="EBI-741480">
        <id>Q9UMX0</id>
        <label>UBQLN1</label>
    </interactant>
    <organismsDiffer>false</organismsDiffer>
    <experiments>6</experiments>
</comment>
<comment type="interaction">
    <interactant intactId="EBI-10238588">
        <id>Q17RB0</id>
    </interactant>
    <interactant intactId="EBI-10173939">
        <id>Q9UMX0-2</id>
        <label>UBQLN1</label>
    </interactant>
    <organismsDiffer>false</organismsDiffer>
    <experiments>3</experiments>
</comment>
<comment type="interaction">
    <interactant intactId="EBI-10238588">
        <id>Q17RB0</id>
    </interactant>
    <interactant intactId="EBI-947187">
        <id>Q9UHD9</id>
        <label>UBQLN2</label>
    </interactant>
    <organismsDiffer>false</organismsDiffer>
    <experiments>3</experiments>
</comment>
<comment type="miscellaneous">
    <text evidence="1">RTL8B is one of at least 11 genes called Mar or Mart related to long terminal repeat retrotransposons. They do not correspond to functional retrotransposons, but rather to neofunctionalized retrotransposons genes.</text>
</comment>
<comment type="similarity">
    <text evidence="2">Belongs to the FAM127 family.</text>
</comment>
<name>RTL8B_HUMAN</name>
<feature type="chain" id="PRO_0000311694" description="Retrotransposon Gag-like protein 8B">
    <location>
        <begin position="1"/>
        <end position="113"/>
    </location>
</feature>
<accession>Q17RB0</accession>
<proteinExistence type="evidence at protein level"/>